<organism>
    <name type="scientific">Arabidopsis thaliana</name>
    <name type="common">Mouse-ear cress</name>
    <dbReference type="NCBI Taxonomy" id="3702"/>
    <lineage>
        <taxon>Eukaryota</taxon>
        <taxon>Viridiplantae</taxon>
        <taxon>Streptophyta</taxon>
        <taxon>Embryophyta</taxon>
        <taxon>Tracheophyta</taxon>
        <taxon>Spermatophyta</taxon>
        <taxon>Magnoliopsida</taxon>
        <taxon>eudicotyledons</taxon>
        <taxon>Gunneridae</taxon>
        <taxon>Pentapetalae</taxon>
        <taxon>rosids</taxon>
        <taxon>malvids</taxon>
        <taxon>Brassicales</taxon>
        <taxon>Brassicaceae</taxon>
        <taxon>Camelineae</taxon>
        <taxon>Arabidopsis</taxon>
    </lineage>
</organism>
<name>TRXH3_ARATH</name>
<proteinExistence type="evidence at protein level"/>
<feature type="initiator methionine" description="Removed" evidence="9">
    <location>
        <position position="1"/>
    </location>
</feature>
<feature type="chain" id="PRO_0000120048" description="Thioredoxin H3">
    <location>
        <begin position="2"/>
        <end position="118"/>
    </location>
</feature>
<feature type="domain" description="Thioredoxin" evidence="2">
    <location>
        <begin position="2"/>
        <end position="113"/>
    </location>
</feature>
<feature type="active site" description="Nucleophile" evidence="1">
    <location>
        <position position="39"/>
    </location>
</feature>
<feature type="active site" description="Nucleophile" evidence="1">
    <location>
        <position position="42"/>
    </location>
</feature>
<feature type="modified residue" description="N-acetylalanine" evidence="9">
    <location>
        <position position="2"/>
    </location>
</feature>
<feature type="disulfide bond" description="Redox-active" evidence="2">
    <location>
        <begin position="39"/>
        <end position="42"/>
    </location>
</feature>
<feature type="mutagenesis site" description="Loss of disulfide reductase activity." evidence="5">
    <original>C</original>
    <variation>S</variation>
    <location>
        <position position="39"/>
    </location>
</feature>
<feature type="mutagenesis site" description="Loss of disulfide reductase activity." evidence="5">
    <original>C</original>
    <variation>S</variation>
    <location>
        <position position="42"/>
    </location>
</feature>
<comment type="function">
    <text evidence="3 5">Thiol-disulfide oxidoreductase that possesses disulfide reductase and insulin disulfide bonds reducing activities. Heat shock causes oligomerization and formation of high molecular weight (HMW) complexes with concomitant functional switching from a disulfide reductase to chaperone.</text>
</comment>
<comment type="subunit">
    <text evidence="4 6 7">Interacts with FBA5 and FBA8 (PubMed:15352244). Interacts with FBA6 (PubMed:21782461). Interacts with MDH1 (PubMed:29194485).</text>
</comment>
<comment type="interaction">
    <interactant intactId="EBI-449157">
        <id>Q42403</id>
    </interactant>
    <interactant intactId="EBI-449365">
        <id>Q05431</id>
        <label>APX1</label>
    </interactant>
    <organismsDiffer>false</organismsDiffer>
    <experiments>2</experiments>
</comment>
<comment type="interaction">
    <interactant intactId="EBI-449157">
        <id>Q42403</id>
    </interactant>
    <interactant intactId="EBI-449319">
        <id>Q9SRZ6</id>
        <label>CICDH</label>
    </interactant>
    <organismsDiffer>false</organismsDiffer>
    <experiments>2</experiments>
</comment>
<comment type="interaction">
    <interactant intactId="EBI-449157">
        <id>Q42403</id>
    </interactant>
    <interactant intactId="EBI-1993349">
        <id>Q9C5T4</id>
        <label>WRKY18</label>
    </interactant>
    <organismsDiffer>false</organismsDiffer>
    <experiments>3</experiments>
</comment>
<comment type="subcellular location">
    <subcellularLocation>
        <location evidence="5">Cytoplasm</location>
    </subcellularLocation>
</comment>
<comment type="disruption phenotype">
    <text evidence="5">High sensitivity to heat shock.</text>
</comment>
<comment type="similarity">
    <text evidence="8">Belongs to the thioredoxin family. Plant H-type subfamily.</text>
</comment>
<comment type="caution">
    <text evidence="8">The active site contains a CPPC motif which differs from the conserved CGPC motif.</text>
</comment>
<evidence type="ECO:0000255" key="1"/>
<evidence type="ECO:0000255" key="2">
    <source>
        <dbReference type="PROSITE-ProRule" id="PRU00691"/>
    </source>
</evidence>
<evidence type="ECO:0000269" key="3">
    <source>
    </source>
</evidence>
<evidence type="ECO:0000269" key="4">
    <source>
    </source>
</evidence>
<evidence type="ECO:0000269" key="5">
    <source>
    </source>
</evidence>
<evidence type="ECO:0000269" key="6">
    <source>
    </source>
</evidence>
<evidence type="ECO:0000269" key="7">
    <source>
    </source>
</evidence>
<evidence type="ECO:0000305" key="8"/>
<evidence type="ECO:0007744" key="9">
    <source>
    </source>
</evidence>
<dbReference type="EMBL" id="Z35474">
    <property type="protein sequence ID" value="CAA84611.1"/>
    <property type="molecule type" value="mRNA"/>
</dbReference>
<dbReference type="EMBL" id="U35640">
    <property type="protein sequence ID" value="AAC49351.1"/>
    <property type="molecule type" value="Genomic_DNA"/>
</dbReference>
<dbReference type="EMBL" id="AB008264">
    <property type="protein sequence ID" value="BAB09200.1"/>
    <property type="molecule type" value="Genomic_DNA"/>
</dbReference>
<dbReference type="EMBL" id="CP002688">
    <property type="protein sequence ID" value="AED94897.1"/>
    <property type="molecule type" value="Genomic_DNA"/>
</dbReference>
<dbReference type="EMBL" id="AY059870">
    <property type="protein sequence ID" value="AAL24352.1"/>
    <property type="molecule type" value="mRNA"/>
</dbReference>
<dbReference type="EMBL" id="AY065098">
    <property type="protein sequence ID" value="AAL38274.1"/>
    <property type="molecule type" value="mRNA"/>
</dbReference>
<dbReference type="EMBL" id="AY093318">
    <property type="protein sequence ID" value="AAM13317.1"/>
    <property type="molecule type" value="mRNA"/>
</dbReference>
<dbReference type="EMBL" id="AY114566">
    <property type="protein sequence ID" value="AAM47885.1"/>
    <property type="molecule type" value="mRNA"/>
</dbReference>
<dbReference type="EMBL" id="AY085117">
    <property type="protein sequence ID" value="AAM61671.1"/>
    <property type="molecule type" value="mRNA"/>
</dbReference>
<dbReference type="EMBL" id="Z35335">
    <property type="protein sequence ID" value="CAA84560.1"/>
    <property type="molecule type" value="mRNA"/>
</dbReference>
<dbReference type="PIR" id="S58118">
    <property type="entry name" value="S58118"/>
</dbReference>
<dbReference type="RefSeq" id="NP_199112.1">
    <property type="nucleotide sequence ID" value="NM_123664.4"/>
</dbReference>
<dbReference type="SMR" id="Q42403"/>
<dbReference type="BioGRID" id="19563">
    <property type="interactions" value="21"/>
</dbReference>
<dbReference type="DIP" id="DIP-32720N"/>
<dbReference type="FunCoup" id="Q42403">
    <property type="interactions" value="1786"/>
</dbReference>
<dbReference type="IntAct" id="Q42403">
    <property type="interactions" value="69"/>
</dbReference>
<dbReference type="STRING" id="3702.Q42403"/>
<dbReference type="MoonProt" id="Q42403"/>
<dbReference type="iPTMnet" id="Q42403"/>
<dbReference type="MetOSite" id="Q42403"/>
<dbReference type="SwissPalm" id="Q42403"/>
<dbReference type="PaxDb" id="3702-AT5G42980.1"/>
<dbReference type="ProteomicsDB" id="234646"/>
<dbReference type="EnsemblPlants" id="AT5G42980.1">
    <property type="protein sequence ID" value="AT5G42980.1"/>
    <property type="gene ID" value="AT5G42980"/>
</dbReference>
<dbReference type="GeneID" id="834313"/>
<dbReference type="Gramene" id="AT5G42980.1">
    <property type="protein sequence ID" value="AT5G42980.1"/>
    <property type="gene ID" value="AT5G42980"/>
</dbReference>
<dbReference type="KEGG" id="ath:AT5G42980"/>
<dbReference type="Araport" id="AT5G42980"/>
<dbReference type="TAIR" id="AT5G42980">
    <property type="gene designation" value="TRX3"/>
</dbReference>
<dbReference type="eggNOG" id="KOG0907">
    <property type="taxonomic scope" value="Eukaryota"/>
</dbReference>
<dbReference type="HOGENOM" id="CLU_090389_14_1_1"/>
<dbReference type="InParanoid" id="Q42403"/>
<dbReference type="OMA" id="HIHYVTD"/>
<dbReference type="OrthoDB" id="10263751at2759"/>
<dbReference type="PhylomeDB" id="Q42403"/>
<dbReference type="CD-CODE" id="4299E36E">
    <property type="entry name" value="Nucleolus"/>
</dbReference>
<dbReference type="PRO" id="PR:Q42403"/>
<dbReference type="Proteomes" id="UP000006548">
    <property type="component" value="Chromosome 5"/>
</dbReference>
<dbReference type="ExpressionAtlas" id="Q42403">
    <property type="expression patterns" value="baseline and differential"/>
</dbReference>
<dbReference type="GO" id="GO:0009507">
    <property type="term" value="C:chloroplast"/>
    <property type="evidence" value="ECO:0007005"/>
    <property type="project" value="TAIR"/>
</dbReference>
<dbReference type="GO" id="GO:0009570">
    <property type="term" value="C:chloroplast stroma"/>
    <property type="evidence" value="ECO:0007005"/>
    <property type="project" value="TAIR"/>
</dbReference>
<dbReference type="GO" id="GO:0005829">
    <property type="term" value="C:cytosol"/>
    <property type="evidence" value="ECO:0000314"/>
    <property type="project" value="UniProtKB"/>
</dbReference>
<dbReference type="GO" id="GO:0005794">
    <property type="term" value="C:Golgi apparatus"/>
    <property type="evidence" value="ECO:0007005"/>
    <property type="project" value="TAIR"/>
</dbReference>
<dbReference type="GO" id="GO:0005739">
    <property type="term" value="C:mitochondrion"/>
    <property type="evidence" value="ECO:0007005"/>
    <property type="project" value="TAIR"/>
</dbReference>
<dbReference type="GO" id="GO:0000325">
    <property type="term" value="C:plant-type vacuole"/>
    <property type="evidence" value="ECO:0007005"/>
    <property type="project" value="TAIR"/>
</dbReference>
<dbReference type="GO" id="GO:0005886">
    <property type="term" value="C:plasma membrane"/>
    <property type="evidence" value="ECO:0007005"/>
    <property type="project" value="TAIR"/>
</dbReference>
<dbReference type="GO" id="GO:0009506">
    <property type="term" value="C:plasmodesma"/>
    <property type="evidence" value="ECO:0007005"/>
    <property type="project" value="TAIR"/>
</dbReference>
<dbReference type="GO" id="GO:0009536">
    <property type="term" value="C:plastid"/>
    <property type="evidence" value="ECO:0007005"/>
    <property type="project" value="TAIR"/>
</dbReference>
<dbReference type="GO" id="GO:0003729">
    <property type="term" value="F:mRNA binding"/>
    <property type="evidence" value="ECO:0000314"/>
    <property type="project" value="TAIR"/>
</dbReference>
<dbReference type="GO" id="GO:0016671">
    <property type="term" value="F:oxidoreductase activity, acting on a sulfur group of donors, disulfide as acceptor"/>
    <property type="evidence" value="ECO:0000314"/>
    <property type="project" value="UniProtKB"/>
</dbReference>
<dbReference type="GO" id="GO:0050832">
    <property type="term" value="P:defense response to fungus"/>
    <property type="evidence" value="ECO:0000315"/>
    <property type="project" value="TAIR"/>
</dbReference>
<dbReference type="GO" id="GO:0010286">
    <property type="term" value="P:heat acclimation"/>
    <property type="evidence" value="ECO:0000315"/>
    <property type="project" value="UniProtKB"/>
</dbReference>
<dbReference type="GO" id="GO:0051259">
    <property type="term" value="P:protein complex oligomerization"/>
    <property type="evidence" value="ECO:0000314"/>
    <property type="project" value="UniProtKB"/>
</dbReference>
<dbReference type="GO" id="GO:0006457">
    <property type="term" value="P:protein folding"/>
    <property type="evidence" value="ECO:0000314"/>
    <property type="project" value="UniProtKB"/>
</dbReference>
<dbReference type="GO" id="GO:0009408">
    <property type="term" value="P:response to heat"/>
    <property type="evidence" value="ECO:0000315"/>
    <property type="project" value="UniProtKB"/>
</dbReference>
<dbReference type="GO" id="GO:0010188">
    <property type="term" value="P:response to microbial phytotoxin"/>
    <property type="evidence" value="ECO:0000315"/>
    <property type="project" value="TAIR"/>
</dbReference>
<dbReference type="CDD" id="cd02947">
    <property type="entry name" value="TRX_family"/>
    <property type="match status" value="1"/>
</dbReference>
<dbReference type="FunFam" id="3.40.30.10:FF:000104">
    <property type="entry name" value="Thioredoxin"/>
    <property type="match status" value="1"/>
</dbReference>
<dbReference type="Gene3D" id="3.40.30.10">
    <property type="entry name" value="Glutaredoxin"/>
    <property type="match status" value="1"/>
</dbReference>
<dbReference type="InterPro" id="IPR036249">
    <property type="entry name" value="Thioredoxin-like_sf"/>
</dbReference>
<dbReference type="InterPro" id="IPR017937">
    <property type="entry name" value="Thioredoxin_CS"/>
</dbReference>
<dbReference type="InterPro" id="IPR013766">
    <property type="entry name" value="Thioredoxin_domain"/>
</dbReference>
<dbReference type="InterPro" id="IPR050620">
    <property type="entry name" value="Thioredoxin_H-type-like"/>
</dbReference>
<dbReference type="PANTHER" id="PTHR10438">
    <property type="entry name" value="THIOREDOXIN"/>
    <property type="match status" value="1"/>
</dbReference>
<dbReference type="PANTHER" id="PTHR10438:SF410">
    <property type="entry name" value="THIOREDOXIN H3"/>
    <property type="match status" value="1"/>
</dbReference>
<dbReference type="Pfam" id="PF00085">
    <property type="entry name" value="Thioredoxin"/>
    <property type="match status" value="1"/>
</dbReference>
<dbReference type="PRINTS" id="PR00421">
    <property type="entry name" value="THIOREDOXIN"/>
</dbReference>
<dbReference type="SUPFAM" id="SSF52833">
    <property type="entry name" value="Thioredoxin-like"/>
    <property type="match status" value="1"/>
</dbReference>
<dbReference type="PROSITE" id="PS00194">
    <property type="entry name" value="THIOREDOXIN_1"/>
    <property type="match status" value="1"/>
</dbReference>
<dbReference type="PROSITE" id="PS51352">
    <property type="entry name" value="THIOREDOXIN_2"/>
    <property type="match status" value="1"/>
</dbReference>
<accession>Q42403</accession>
<gene>
    <name type="primary">TRX3</name>
    <name type="ordered locus">At5g42980</name>
    <name type="ORF">MBD2.18</name>
</gene>
<protein>
    <recommendedName>
        <fullName>Thioredoxin H3</fullName>
        <shortName>AtTrxh3</shortName>
    </recommendedName>
    <alternativeName>
        <fullName>Thioredoxin 3</fullName>
        <shortName>AtTRX3</shortName>
    </alternativeName>
</protein>
<reference key="1">
    <citation type="journal article" date="1995" name="Proc. Natl. Acad. Sci. U.S.A.">
        <title>Evidence for five divergent thioredoxin h sequences in Arabidopsis thaliana.</title>
        <authorList>
            <person name="Rivera-Madrid R."/>
            <person name="Mestres D."/>
            <person name="Marinho P."/>
            <person name="Jacquot J.-P."/>
            <person name="Decottignies P."/>
            <person name="Miginiac-Maslow M."/>
            <person name="Meyer Y."/>
        </authorList>
    </citation>
    <scope>NUCLEOTIDE SEQUENCE [MRNA]</scope>
    <source>
        <strain>cv. Columbia</strain>
        <tissue>Callus</tissue>
    </source>
</reference>
<reference key="2">
    <citation type="journal article" date="1996" name="J. Mol. Evol.">
        <title>Intron position as an evolutionary marker of thioredoxins and thioredoxin domains.</title>
        <authorList>
            <person name="Sahrawy M."/>
            <person name="Hecht V."/>
            <person name="Lopez Jaramillo J."/>
            <person name="Chueca A."/>
            <person name="Chartier Y."/>
            <person name="Meyer Y."/>
        </authorList>
    </citation>
    <scope>NUCLEOTIDE SEQUENCE [GENOMIC DNA]</scope>
    <source>
        <strain>cv. Landsberg erecta</strain>
    </source>
</reference>
<reference key="3">
    <citation type="journal article" date="1997" name="DNA Res.">
        <title>Structural analysis of Arabidopsis thaliana chromosome 5. III. Sequence features of the regions of 1,191,918 bp covered by seventeen physically assigned P1 clones.</title>
        <authorList>
            <person name="Nakamura Y."/>
            <person name="Sato S."/>
            <person name="Kaneko T."/>
            <person name="Kotani H."/>
            <person name="Asamizu E."/>
            <person name="Miyajima N."/>
            <person name="Tabata S."/>
        </authorList>
    </citation>
    <scope>NUCLEOTIDE SEQUENCE [LARGE SCALE GENOMIC DNA]</scope>
    <source>
        <strain>cv. Columbia</strain>
    </source>
</reference>
<reference key="4">
    <citation type="journal article" date="2017" name="Plant J.">
        <title>Araport11: a complete reannotation of the Arabidopsis thaliana reference genome.</title>
        <authorList>
            <person name="Cheng C.Y."/>
            <person name="Krishnakumar V."/>
            <person name="Chan A.P."/>
            <person name="Thibaud-Nissen F."/>
            <person name="Schobel S."/>
            <person name="Town C.D."/>
        </authorList>
    </citation>
    <scope>GENOME REANNOTATION</scope>
    <source>
        <strain>cv. Columbia</strain>
    </source>
</reference>
<reference key="5">
    <citation type="journal article" date="2003" name="Science">
        <title>Empirical analysis of transcriptional activity in the Arabidopsis genome.</title>
        <authorList>
            <person name="Yamada K."/>
            <person name="Lim J."/>
            <person name="Dale J.M."/>
            <person name="Chen H."/>
            <person name="Shinn P."/>
            <person name="Palm C.J."/>
            <person name="Southwick A.M."/>
            <person name="Wu H.C."/>
            <person name="Kim C.J."/>
            <person name="Nguyen M."/>
            <person name="Pham P.K."/>
            <person name="Cheuk R.F."/>
            <person name="Karlin-Newmann G."/>
            <person name="Liu S.X."/>
            <person name="Lam B."/>
            <person name="Sakano H."/>
            <person name="Wu T."/>
            <person name="Yu G."/>
            <person name="Miranda M."/>
            <person name="Quach H.L."/>
            <person name="Tripp M."/>
            <person name="Chang C.H."/>
            <person name="Lee J.M."/>
            <person name="Toriumi M.J."/>
            <person name="Chan M.M."/>
            <person name="Tang C.C."/>
            <person name="Onodera C.S."/>
            <person name="Deng J.M."/>
            <person name="Akiyama K."/>
            <person name="Ansari Y."/>
            <person name="Arakawa T."/>
            <person name="Banh J."/>
            <person name="Banno F."/>
            <person name="Bowser L."/>
            <person name="Brooks S.Y."/>
            <person name="Carninci P."/>
            <person name="Chao Q."/>
            <person name="Choy N."/>
            <person name="Enju A."/>
            <person name="Goldsmith A.D."/>
            <person name="Gurjal M."/>
            <person name="Hansen N.F."/>
            <person name="Hayashizaki Y."/>
            <person name="Johnson-Hopson C."/>
            <person name="Hsuan V.W."/>
            <person name="Iida K."/>
            <person name="Karnes M."/>
            <person name="Khan S."/>
            <person name="Koesema E."/>
            <person name="Ishida J."/>
            <person name="Jiang P.X."/>
            <person name="Jones T."/>
            <person name="Kawai J."/>
            <person name="Kamiya A."/>
            <person name="Meyers C."/>
            <person name="Nakajima M."/>
            <person name="Narusaka M."/>
            <person name="Seki M."/>
            <person name="Sakurai T."/>
            <person name="Satou M."/>
            <person name="Tamse R."/>
            <person name="Vaysberg M."/>
            <person name="Wallender E.K."/>
            <person name="Wong C."/>
            <person name="Yamamura Y."/>
            <person name="Yuan S."/>
            <person name="Shinozaki K."/>
            <person name="Davis R.W."/>
            <person name="Theologis A."/>
            <person name="Ecker J.R."/>
        </authorList>
    </citation>
    <scope>NUCLEOTIDE SEQUENCE [LARGE SCALE MRNA]</scope>
    <source>
        <strain>cv. Columbia</strain>
    </source>
</reference>
<reference key="6">
    <citation type="submission" date="2002-03" db="EMBL/GenBank/DDBJ databases">
        <title>Full-length cDNA from Arabidopsis thaliana.</title>
        <authorList>
            <person name="Brover V.V."/>
            <person name="Troukhan M.E."/>
            <person name="Alexandrov N.A."/>
            <person name="Lu Y.-P."/>
            <person name="Flavell R.B."/>
            <person name="Feldmann K.A."/>
        </authorList>
    </citation>
    <scope>NUCLEOTIDE SEQUENCE [LARGE SCALE MRNA]</scope>
</reference>
<reference key="7">
    <citation type="journal article" date="1996" name="Plant J.">
        <title>Further progress towards a catalogue of all Arabidopsis genes: analysis of a set of 5000 non-redundant ESTs.</title>
        <authorList>
            <person name="Cooke R."/>
            <person name="Raynal M."/>
            <person name="Laudie M."/>
            <person name="Grellet F."/>
            <person name="Delseny M."/>
            <person name="Morris P.-C."/>
            <person name="Guerrier D."/>
            <person name="Giraudat J."/>
            <person name="Quigley F."/>
            <person name="Clabault G."/>
            <person name="Li Y.-F."/>
            <person name="Mache R."/>
            <person name="Krivitzky M."/>
            <person name="Gy I.J.-J."/>
            <person name="Kreis M."/>
            <person name="Lecharny A."/>
            <person name="Parmentier Y."/>
            <person name="Marbach J."/>
            <person name="Fleck J."/>
            <person name="Clement B."/>
            <person name="Philipps G."/>
            <person name="Herve C."/>
            <person name="Bardet C."/>
            <person name="Tremousaygue D."/>
            <person name="Lescure B."/>
            <person name="Lacomme C."/>
            <person name="Roby D."/>
            <person name="Jourjon M.-F."/>
            <person name="Chabrier P."/>
            <person name="Charpenteau J.-L."/>
            <person name="Desprez T."/>
            <person name="Amselem J."/>
            <person name="Chiapello H."/>
            <person name="Hoefte H."/>
        </authorList>
    </citation>
    <scope>NUCLEOTIDE SEQUENCE [LARGE SCALE MRNA] OF 33-105</scope>
    <source>
        <strain>cv. Columbia</strain>
    </source>
</reference>
<reference key="8">
    <citation type="journal article" date="2004" name="Plant Cell Physiol.">
        <title>Target proteins of the cytosolic thioredoxins in Arabidopsis thaliana.</title>
        <authorList>
            <person name="Yamazaki D."/>
            <person name="Motohashi K."/>
            <person name="Kasama T."/>
            <person name="Hara Y."/>
            <person name="Hisabori T."/>
        </authorList>
    </citation>
    <scope>FUNCTION</scope>
</reference>
<reference key="9">
    <citation type="journal article" date="2004" name="Proteomics">
        <title>New targets of Arabidopsis thioredoxins revealed by proteomic analysis.</title>
        <authorList>
            <person name="Marchand C."/>
            <person name="Le Marechal P."/>
            <person name="Meyer Y."/>
            <person name="Miginiac-Maslow M."/>
            <person name="Issakidis-Bourguet E."/>
            <person name="Decottignies P."/>
        </authorList>
    </citation>
    <scope>INTERACTION WITH FBA5 AND FBA8</scope>
</reference>
<reference key="10">
    <citation type="journal article" date="2007" name="Mol. Cell. Proteomics">
        <title>Multidimensional protein identification technology (MudPIT) analysis of ubiquitinated proteins in plants.</title>
        <authorList>
            <person name="Maor R."/>
            <person name="Jones A."/>
            <person name="Nuehse T.S."/>
            <person name="Studholme D.J."/>
            <person name="Peck S.C."/>
            <person name="Shirasu K."/>
        </authorList>
    </citation>
    <scope>IDENTIFICATION BY MASS SPECTROMETRY [LARGE SCALE ANALYSIS]</scope>
    <source>
        <strain>cv. Landsberg erecta</strain>
    </source>
</reference>
<reference key="11">
    <citation type="journal article" date="2009" name="Mol. Plant">
        <title>Comparative genomic study of the thioredoxin family in photosynthetic organisms with emphasis on Populus trichocarpa.</title>
        <authorList>
            <person name="Chibani K."/>
            <person name="Wingsle G."/>
            <person name="Jacquot J.P."/>
            <person name="Gelhaye E."/>
            <person name="Rouhier N."/>
        </authorList>
    </citation>
    <scope>GENE FAMILY</scope>
    <scope>NOMENCLATURE</scope>
</reference>
<reference key="12">
    <citation type="journal article" date="2009" name="Plant Physiol.">
        <title>Heat-shock and redox-dependent functional switching of an h-type Arabidopsis thioredoxin from a disulfide reductase to a molecular chaperone.</title>
        <authorList>
            <person name="Park S.K."/>
            <person name="Jung Y.J."/>
            <person name="Lee J.R."/>
            <person name="Lee Y.M."/>
            <person name="Jang H.H."/>
            <person name="Lee S.S."/>
            <person name="Park J.H."/>
            <person name="Kim S.Y."/>
            <person name="Moon J.C."/>
            <person name="Lee S.Y."/>
            <person name="Chae H.B."/>
            <person name="Shin M.R."/>
            <person name="Jung J.H."/>
            <person name="Kim M.G."/>
            <person name="Kim W.Y."/>
            <person name="Yun D.J."/>
            <person name="Lee K.O."/>
            <person name="Lee S.Y."/>
        </authorList>
    </citation>
    <scope>FUNCTION</scope>
    <scope>SUBCELLULAR LOCATION</scope>
    <scope>DISRUPTION PHENOTYPE</scope>
    <scope>MUTAGENESIS OF CYS-39 AND CYS-42</scope>
</reference>
<reference key="13">
    <citation type="journal article" date="2011" name="Plant Physiol. Biochem.">
        <title>Regulation of plant cytosolic aldolase functions by redox-modifications.</title>
        <authorList>
            <person name="van der Linde K."/>
            <person name="Gutsche N."/>
            <person name="Leffers H.M."/>
            <person name="Lindermayr C."/>
            <person name="Mueller B."/>
            <person name="Holtgrefe S."/>
            <person name="Scheibe R."/>
        </authorList>
    </citation>
    <scope>INTERACTION WITH FBA6</scope>
</reference>
<reference key="14">
    <citation type="journal article" date="2012" name="Mol. Cell. Proteomics">
        <title>Comparative large-scale characterisation of plant vs. mammal proteins reveals similar and idiosyncratic N-alpha acetylation features.</title>
        <authorList>
            <person name="Bienvenut W.V."/>
            <person name="Sumpton D."/>
            <person name="Martinez A."/>
            <person name="Lilla S."/>
            <person name="Espagne C."/>
            <person name="Meinnel T."/>
            <person name="Giglione C."/>
        </authorList>
    </citation>
    <scope>ACETYLATION [LARGE SCALE ANALYSIS] AT ALA-2</scope>
    <scope>CLEAVAGE OF INITIATOR METHIONINE [LARGE SCALE ANALYSIS]</scope>
    <scope>IDENTIFICATION BY MASS SPECTROMETRY [LARGE SCALE ANALYSIS]</scope>
</reference>
<reference key="15">
    <citation type="journal article" date="2018" name="J. Exp. Bot.">
        <title>Self-protection of cytosolic malate dehydrogenase against oxidative stress in Arabidopsis.</title>
        <authorList>
            <person name="Huang J."/>
            <person name="Niazi A.K."/>
            <person name="Young D."/>
            <person name="Rosado L.A."/>
            <person name="Vertommen D."/>
            <person name="Bodra N."/>
            <person name="Abdelgawwad M.R."/>
            <person name="Vignols F."/>
            <person name="Wei B."/>
            <person name="Wahni K."/>
            <person name="Bashandy T."/>
            <person name="Bariat L."/>
            <person name="Van Breusegem F."/>
            <person name="Messens J."/>
            <person name="Reichheld J.P."/>
        </authorList>
    </citation>
    <scope>INTERACTION WITH MDH1</scope>
</reference>
<sequence>MAAEGEVIACHTVEDWTEKLKAANESKKLIVIDFTATWCPPCRFIAPVFADLAKKHLDVVFFKVDVDELNTVAEEFKVQAMPTFIFMKEGEIKETVVGAAKEEIIANLEKHKTVVAAA</sequence>
<keyword id="KW-0007">Acetylation</keyword>
<keyword id="KW-0143">Chaperone</keyword>
<keyword id="KW-0963">Cytoplasm</keyword>
<keyword id="KW-1015">Disulfide bond</keyword>
<keyword id="KW-0249">Electron transport</keyword>
<keyword id="KW-0676">Redox-active center</keyword>
<keyword id="KW-1185">Reference proteome</keyword>
<keyword id="KW-0813">Transport</keyword>